<organism>
    <name type="scientific">Arabidopsis thaliana</name>
    <name type="common">Mouse-ear cress</name>
    <dbReference type="NCBI Taxonomy" id="3702"/>
    <lineage>
        <taxon>Eukaryota</taxon>
        <taxon>Viridiplantae</taxon>
        <taxon>Streptophyta</taxon>
        <taxon>Embryophyta</taxon>
        <taxon>Tracheophyta</taxon>
        <taxon>Spermatophyta</taxon>
        <taxon>Magnoliopsida</taxon>
        <taxon>eudicotyledons</taxon>
        <taxon>Gunneridae</taxon>
        <taxon>Pentapetalae</taxon>
        <taxon>rosids</taxon>
        <taxon>malvids</taxon>
        <taxon>Brassicales</taxon>
        <taxon>Brassicaceae</taxon>
        <taxon>Camelineae</taxon>
        <taxon>Arabidopsis</taxon>
    </lineage>
</organism>
<gene>
    <name type="primary">CML33</name>
    <name type="ordered locus">At3g03400</name>
    <name type="ORF">T21P5.18</name>
</gene>
<accession>Q9SRP4</accession>
<comment type="function">
    <text evidence="1">Potential calcium sensor.</text>
</comment>
<comment type="caution">
    <text evidence="3">Although assigned as a calmodulin family member by Ref.3, it only contains EF-hand domains.</text>
</comment>
<keyword id="KW-0106">Calcium</keyword>
<keyword id="KW-0479">Metal-binding</keyword>
<keyword id="KW-1185">Reference proteome</keyword>
<keyword id="KW-0677">Repeat</keyword>
<name>CML33_ARATH</name>
<reference key="1">
    <citation type="journal article" date="2000" name="Nature">
        <title>Sequence and analysis of chromosome 3 of the plant Arabidopsis thaliana.</title>
        <authorList>
            <person name="Salanoubat M."/>
            <person name="Lemcke K."/>
            <person name="Rieger M."/>
            <person name="Ansorge W."/>
            <person name="Unseld M."/>
            <person name="Fartmann B."/>
            <person name="Valle G."/>
            <person name="Bloecker H."/>
            <person name="Perez-Alonso M."/>
            <person name="Obermaier B."/>
            <person name="Delseny M."/>
            <person name="Boutry M."/>
            <person name="Grivell L.A."/>
            <person name="Mache R."/>
            <person name="Puigdomenech P."/>
            <person name="De Simone V."/>
            <person name="Choisne N."/>
            <person name="Artiguenave F."/>
            <person name="Robert C."/>
            <person name="Brottier P."/>
            <person name="Wincker P."/>
            <person name="Cattolico L."/>
            <person name="Weissenbach J."/>
            <person name="Saurin W."/>
            <person name="Quetier F."/>
            <person name="Schaefer M."/>
            <person name="Mueller-Auer S."/>
            <person name="Gabel C."/>
            <person name="Fuchs M."/>
            <person name="Benes V."/>
            <person name="Wurmbach E."/>
            <person name="Drzonek H."/>
            <person name="Erfle H."/>
            <person name="Jordan N."/>
            <person name="Bangert S."/>
            <person name="Wiedelmann R."/>
            <person name="Kranz H."/>
            <person name="Voss H."/>
            <person name="Holland R."/>
            <person name="Brandt P."/>
            <person name="Nyakatura G."/>
            <person name="Vezzi A."/>
            <person name="D'Angelo M."/>
            <person name="Pallavicini A."/>
            <person name="Toppo S."/>
            <person name="Simionati B."/>
            <person name="Conrad A."/>
            <person name="Hornischer K."/>
            <person name="Kauer G."/>
            <person name="Loehnert T.-H."/>
            <person name="Nordsiek G."/>
            <person name="Reichelt J."/>
            <person name="Scharfe M."/>
            <person name="Schoen O."/>
            <person name="Bargues M."/>
            <person name="Terol J."/>
            <person name="Climent J."/>
            <person name="Navarro P."/>
            <person name="Collado C."/>
            <person name="Perez-Perez A."/>
            <person name="Ottenwaelder B."/>
            <person name="Duchemin D."/>
            <person name="Cooke R."/>
            <person name="Laudie M."/>
            <person name="Berger-Llauro C."/>
            <person name="Purnelle B."/>
            <person name="Masuy D."/>
            <person name="de Haan M."/>
            <person name="Maarse A.C."/>
            <person name="Alcaraz J.-P."/>
            <person name="Cottet A."/>
            <person name="Casacuberta E."/>
            <person name="Monfort A."/>
            <person name="Argiriou A."/>
            <person name="Flores M."/>
            <person name="Liguori R."/>
            <person name="Vitale D."/>
            <person name="Mannhaupt G."/>
            <person name="Haase D."/>
            <person name="Schoof H."/>
            <person name="Rudd S."/>
            <person name="Zaccaria P."/>
            <person name="Mewes H.-W."/>
            <person name="Mayer K.F.X."/>
            <person name="Kaul S."/>
            <person name="Town C.D."/>
            <person name="Koo H.L."/>
            <person name="Tallon L.J."/>
            <person name="Jenkins J."/>
            <person name="Rooney T."/>
            <person name="Rizzo M."/>
            <person name="Walts A."/>
            <person name="Utterback T."/>
            <person name="Fujii C.Y."/>
            <person name="Shea T.P."/>
            <person name="Creasy T.H."/>
            <person name="Haas B."/>
            <person name="Maiti R."/>
            <person name="Wu D."/>
            <person name="Peterson J."/>
            <person name="Van Aken S."/>
            <person name="Pai G."/>
            <person name="Militscher J."/>
            <person name="Sellers P."/>
            <person name="Gill J.E."/>
            <person name="Feldblyum T.V."/>
            <person name="Preuss D."/>
            <person name="Lin X."/>
            <person name="Nierman W.C."/>
            <person name="Salzberg S.L."/>
            <person name="White O."/>
            <person name="Venter J.C."/>
            <person name="Fraser C.M."/>
            <person name="Kaneko T."/>
            <person name="Nakamura Y."/>
            <person name="Sato S."/>
            <person name="Kato T."/>
            <person name="Asamizu E."/>
            <person name="Sasamoto S."/>
            <person name="Kimura T."/>
            <person name="Idesawa K."/>
            <person name="Kawashima K."/>
            <person name="Kishida Y."/>
            <person name="Kiyokawa C."/>
            <person name="Kohara M."/>
            <person name="Matsumoto M."/>
            <person name="Matsuno A."/>
            <person name="Muraki A."/>
            <person name="Nakayama S."/>
            <person name="Nakazaki N."/>
            <person name="Shinpo S."/>
            <person name="Takeuchi C."/>
            <person name="Wada T."/>
            <person name="Watanabe A."/>
            <person name="Yamada M."/>
            <person name="Yasuda M."/>
            <person name="Tabata S."/>
        </authorList>
    </citation>
    <scope>NUCLEOTIDE SEQUENCE [LARGE SCALE GENOMIC DNA]</scope>
    <source>
        <strain>cv. Columbia</strain>
    </source>
</reference>
<reference key="2">
    <citation type="journal article" date="2017" name="Plant J.">
        <title>Araport11: a complete reannotation of the Arabidopsis thaliana reference genome.</title>
        <authorList>
            <person name="Cheng C.Y."/>
            <person name="Krishnakumar V."/>
            <person name="Chan A.P."/>
            <person name="Thibaud-Nissen F."/>
            <person name="Schobel S."/>
            <person name="Town C.D."/>
        </authorList>
    </citation>
    <scope>GENOME REANNOTATION</scope>
    <source>
        <strain>cv. Columbia</strain>
    </source>
</reference>
<reference key="3">
    <citation type="journal article" date="2003" name="New Phytol.">
        <title>Calmodulins and related potential calcium sensors of Arabidopsis.</title>
        <authorList>
            <person name="McCormack E."/>
            <person name="Braam J."/>
        </authorList>
    </citation>
    <scope>GENE FAMILY</scope>
    <scope>NOMENCLATURE</scope>
</reference>
<evidence type="ECO:0000250" key="1"/>
<evidence type="ECO:0000255" key="2">
    <source>
        <dbReference type="PROSITE-ProRule" id="PRU00448"/>
    </source>
</evidence>
<evidence type="ECO:0000305" key="3"/>
<protein>
    <recommendedName>
        <fullName>Probable calcium-binding protein CML33</fullName>
    </recommendedName>
    <alternativeName>
        <fullName>Calmodulin-like protein 33</fullName>
    </alternativeName>
</protein>
<dbReference type="EMBL" id="AC009895">
    <property type="protein sequence ID" value="AAF01605.1"/>
    <property type="molecule type" value="Genomic_DNA"/>
</dbReference>
<dbReference type="EMBL" id="CP002686">
    <property type="protein sequence ID" value="AEE73939.1"/>
    <property type="molecule type" value="Genomic_DNA"/>
</dbReference>
<dbReference type="RefSeq" id="NP_186990.1">
    <property type="nucleotide sequence ID" value="NM_111211.1"/>
</dbReference>
<dbReference type="SMR" id="Q9SRP4"/>
<dbReference type="FunCoup" id="Q9SRP4">
    <property type="interactions" value="248"/>
</dbReference>
<dbReference type="STRING" id="3702.Q9SRP4"/>
<dbReference type="PaxDb" id="3702-AT3G03400.1"/>
<dbReference type="EnsemblPlants" id="AT3G03400.1">
    <property type="protein sequence ID" value="AT3G03400.1"/>
    <property type="gene ID" value="AT3G03400"/>
</dbReference>
<dbReference type="GeneID" id="821266"/>
<dbReference type="Gramene" id="AT3G03400.1">
    <property type="protein sequence ID" value="AT3G03400.1"/>
    <property type="gene ID" value="AT3G03400"/>
</dbReference>
<dbReference type="KEGG" id="ath:AT3G03400"/>
<dbReference type="Araport" id="AT3G03400"/>
<dbReference type="TAIR" id="AT3G03400"/>
<dbReference type="eggNOG" id="KOG0027">
    <property type="taxonomic scope" value="Eukaryota"/>
</dbReference>
<dbReference type="HOGENOM" id="CLU_061288_20_7_1"/>
<dbReference type="InParanoid" id="Q9SRP4"/>
<dbReference type="OMA" id="EKCTVES"/>
<dbReference type="PhylomeDB" id="Q9SRP4"/>
<dbReference type="PRO" id="PR:Q9SRP4"/>
<dbReference type="Proteomes" id="UP000006548">
    <property type="component" value="Chromosome 3"/>
</dbReference>
<dbReference type="ExpressionAtlas" id="Q9SRP4">
    <property type="expression patterns" value="baseline and differential"/>
</dbReference>
<dbReference type="GO" id="GO:0005509">
    <property type="term" value="F:calcium ion binding"/>
    <property type="evidence" value="ECO:0007669"/>
    <property type="project" value="InterPro"/>
</dbReference>
<dbReference type="CDD" id="cd00051">
    <property type="entry name" value="EFh"/>
    <property type="match status" value="2"/>
</dbReference>
<dbReference type="FunFam" id="1.10.238.10:FF:000505">
    <property type="entry name" value="Probable calcium-binding protein CML34"/>
    <property type="match status" value="1"/>
</dbReference>
<dbReference type="Gene3D" id="1.10.238.10">
    <property type="entry name" value="EF-hand"/>
    <property type="match status" value="2"/>
</dbReference>
<dbReference type="InterPro" id="IPR011992">
    <property type="entry name" value="EF-hand-dom_pair"/>
</dbReference>
<dbReference type="InterPro" id="IPR018247">
    <property type="entry name" value="EF_Hand_1_Ca_BS"/>
</dbReference>
<dbReference type="InterPro" id="IPR002048">
    <property type="entry name" value="EF_hand_dom"/>
</dbReference>
<dbReference type="InterPro" id="IPR039647">
    <property type="entry name" value="EF_hand_pair_protein_CML-like"/>
</dbReference>
<dbReference type="PANTHER" id="PTHR10891">
    <property type="entry name" value="EF-HAND CALCIUM-BINDING DOMAIN CONTAINING PROTEIN"/>
    <property type="match status" value="1"/>
</dbReference>
<dbReference type="Pfam" id="PF00036">
    <property type="entry name" value="EF-hand_1"/>
    <property type="match status" value="1"/>
</dbReference>
<dbReference type="Pfam" id="PF13202">
    <property type="entry name" value="EF-hand_5"/>
    <property type="match status" value="1"/>
</dbReference>
<dbReference type="Pfam" id="PF13499">
    <property type="entry name" value="EF-hand_7"/>
    <property type="match status" value="1"/>
</dbReference>
<dbReference type="SMART" id="SM00054">
    <property type="entry name" value="EFh"/>
    <property type="match status" value="3"/>
</dbReference>
<dbReference type="SUPFAM" id="SSF47473">
    <property type="entry name" value="EF-hand"/>
    <property type="match status" value="1"/>
</dbReference>
<dbReference type="PROSITE" id="PS00018">
    <property type="entry name" value="EF_HAND_1"/>
    <property type="match status" value="2"/>
</dbReference>
<dbReference type="PROSITE" id="PS50222">
    <property type="entry name" value="EF_HAND_2"/>
    <property type="match status" value="4"/>
</dbReference>
<feature type="chain" id="PRO_0000342959" description="Probable calcium-binding protein CML33">
    <location>
        <begin position="1"/>
        <end position="137"/>
    </location>
</feature>
<feature type="domain" description="EF-hand 1" evidence="2">
    <location>
        <begin position="1"/>
        <end position="36"/>
    </location>
</feature>
<feature type="domain" description="EF-hand 2" evidence="2">
    <location>
        <begin position="37"/>
        <end position="72"/>
    </location>
</feature>
<feature type="domain" description="EF-hand 3" evidence="2">
    <location>
        <begin position="76"/>
        <end position="111"/>
    </location>
</feature>
<feature type="domain" description="EF-hand 4" evidence="2">
    <location>
        <begin position="112"/>
        <end position="137"/>
    </location>
</feature>
<feature type="binding site" evidence="2">
    <location>
        <position position="14"/>
    </location>
    <ligand>
        <name>Ca(2+)</name>
        <dbReference type="ChEBI" id="CHEBI:29108"/>
        <label>1</label>
    </ligand>
</feature>
<feature type="binding site" evidence="2">
    <location>
        <position position="16"/>
    </location>
    <ligand>
        <name>Ca(2+)</name>
        <dbReference type="ChEBI" id="CHEBI:29108"/>
        <label>1</label>
    </ligand>
</feature>
<feature type="binding site" evidence="2">
    <location>
        <position position="18"/>
    </location>
    <ligand>
        <name>Ca(2+)</name>
        <dbReference type="ChEBI" id="CHEBI:29108"/>
        <label>1</label>
    </ligand>
</feature>
<feature type="binding site" evidence="2">
    <location>
        <position position="20"/>
    </location>
    <ligand>
        <name>Ca(2+)</name>
        <dbReference type="ChEBI" id="CHEBI:29108"/>
        <label>1</label>
    </ligand>
</feature>
<feature type="binding site" evidence="2">
    <location>
        <position position="25"/>
    </location>
    <ligand>
        <name>Ca(2+)</name>
        <dbReference type="ChEBI" id="CHEBI:29108"/>
        <label>1</label>
    </ligand>
</feature>
<feature type="binding site" evidence="2">
    <location>
        <position position="89"/>
    </location>
    <ligand>
        <name>Ca(2+)</name>
        <dbReference type="ChEBI" id="CHEBI:29108"/>
        <label>2</label>
    </ligand>
</feature>
<feature type="binding site" evidence="2">
    <location>
        <position position="91"/>
    </location>
    <ligand>
        <name>Ca(2+)</name>
        <dbReference type="ChEBI" id="CHEBI:29108"/>
        <label>2</label>
    </ligand>
</feature>
<feature type="binding site" evidence="2">
    <location>
        <position position="93"/>
    </location>
    <ligand>
        <name>Ca(2+)</name>
        <dbReference type="ChEBI" id="CHEBI:29108"/>
        <label>2</label>
    </ligand>
</feature>
<feature type="binding site" evidence="2">
    <location>
        <position position="95"/>
    </location>
    <ligand>
        <name>Ca(2+)</name>
        <dbReference type="ChEBI" id="CHEBI:29108"/>
        <label>2</label>
    </ligand>
</feature>
<feature type="binding site" evidence="2">
    <location>
        <position position="100"/>
    </location>
    <ligand>
        <name>Ca(2+)</name>
        <dbReference type="ChEBI" id="CHEBI:29108"/>
        <label>2</label>
    </ligand>
</feature>
<proteinExistence type="evidence at transcript level"/>
<sequence length="137" mass="15068">MNNMSLSDIFERFDTSKDGKISWEEFRDAIHALSPSIPSEKLVEMFIQLDTNGDGQVDAAKFASCMDQTAQSSGGDVEKELKDAFKLYDINCDGKISANELHVVMTRLGEKCTVESCVGMVQAIDVDGDGYIRFVGV</sequence>